<accession>Q2GDX3</accession>
<reference key="1">
    <citation type="journal article" date="2006" name="PLoS Genet.">
        <title>Comparative genomics of emerging human ehrlichiosis agents.</title>
        <authorList>
            <person name="Dunning Hotopp J.C."/>
            <person name="Lin M."/>
            <person name="Madupu R."/>
            <person name="Crabtree J."/>
            <person name="Angiuoli S.V."/>
            <person name="Eisen J.A."/>
            <person name="Seshadri R."/>
            <person name="Ren Q."/>
            <person name="Wu M."/>
            <person name="Utterback T.R."/>
            <person name="Smith S."/>
            <person name="Lewis M."/>
            <person name="Khouri H."/>
            <person name="Zhang C."/>
            <person name="Niu H."/>
            <person name="Lin Q."/>
            <person name="Ohashi N."/>
            <person name="Zhi N."/>
            <person name="Nelson W.C."/>
            <person name="Brinkac L.M."/>
            <person name="Dodson R.J."/>
            <person name="Rosovitz M.J."/>
            <person name="Sundaram J.P."/>
            <person name="Daugherty S.C."/>
            <person name="Davidsen T."/>
            <person name="Durkin A.S."/>
            <person name="Gwinn M.L."/>
            <person name="Haft D.H."/>
            <person name="Selengut J.D."/>
            <person name="Sullivan S.A."/>
            <person name="Zafar N."/>
            <person name="Zhou L."/>
            <person name="Benahmed F."/>
            <person name="Forberger H."/>
            <person name="Halpin R."/>
            <person name="Mulligan S."/>
            <person name="Robinson J."/>
            <person name="White O."/>
            <person name="Rikihisa Y."/>
            <person name="Tettelin H."/>
        </authorList>
    </citation>
    <scope>NUCLEOTIDE SEQUENCE [LARGE SCALE GENOMIC DNA]</scope>
    <source>
        <strain>ATCC VR-367 / Miyayama</strain>
    </source>
</reference>
<comment type="function">
    <text evidence="1">Catalyzes the conversion of 1-hydroxy-2-methyl-2-(E)-butenyl 4-diphosphate (HMBPP) into a mixture of isopentenyl diphosphate (IPP) and dimethylallyl diphosphate (DMAPP). Acts in the terminal step of the DOXP/MEP pathway for isoprenoid precursor biosynthesis.</text>
</comment>
<comment type="catalytic activity">
    <reaction evidence="1">
        <text>isopentenyl diphosphate + 2 oxidized [2Fe-2S]-[ferredoxin] + H2O = (2E)-4-hydroxy-3-methylbut-2-enyl diphosphate + 2 reduced [2Fe-2S]-[ferredoxin] + 2 H(+)</text>
        <dbReference type="Rhea" id="RHEA:24488"/>
        <dbReference type="Rhea" id="RHEA-COMP:10000"/>
        <dbReference type="Rhea" id="RHEA-COMP:10001"/>
        <dbReference type="ChEBI" id="CHEBI:15377"/>
        <dbReference type="ChEBI" id="CHEBI:15378"/>
        <dbReference type="ChEBI" id="CHEBI:33737"/>
        <dbReference type="ChEBI" id="CHEBI:33738"/>
        <dbReference type="ChEBI" id="CHEBI:128753"/>
        <dbReference type="ChEBI" id="CHEBI:128769"/>
        <dbReference type="EC" id="1.17.7.4"/>
    </reaction>
</comment>
<comment type="catalytic activity">
    <reaction evidence="1">
        <text>dimethylallyl diphosphate + 2 oxidized [2Fe-2S]-[ferredoxin] + H2O = (2E)-4-hydroxy-3-methylbut-2-enyl diphosphate + 2 reduced [2Fe-2S]-[ferredoxin] + 2 H(+)</text>
        <dbReference type="Rhea" id="RHEA:24825"/>
        <dbReference type="Rhea" id="RHEA-COMP:10000"/>
        <dbReference type="Rhea" id="RHEA-COMP:10001"/>
        <dbReference type="ChEBI" id="CHEBI:15377"/>
        <dbReference type="ChEBI" id="CHEBI:15378"/>
        <dbReference type="ChEBI" id="CHEBI:33737"/>
        <dbReference type="ChEBI" id="CHEBI:33738"/>
        <dbReference type="ChEBI" id="CHEBI:57623"/>
        <dbReference type="ChEBI" id="CHEBI:128753"/>
        <dbReference type="EC" id="1.17.7.4"/>
    </reaction>
</comment>
<comment type="cofactor">
    <cofactor evidence="1">
        <name>[4Fe-4S] cluster</name>
        <dbReference type="ChEBI" id="CHEBI:49883"/>
    </cofactor>
    <text evidence="1">Binds 1 [4Fe-4S] cluster per subunit.</text>
</comment>
<comment type="pathway">
    <text evidence="1">Isoprenoid biosynthesis; dimethylallyl diphosphate biosynthesis; dimethylallyl diphosphate from (2E)-4-hydroxy-3-methylbutenyl diphosphate: step 1/1.</text>
</comment>
<comment type="pathway">
    <text evidence="1">Isoprenoid biosynthesis; isopentenyl diphosphate biosynthesis via DXP pathway; isopentenyl diphosphate from 1-deoxy-D-xylulose 5-phosphate: step 6/6.</text>
</comment>
<comment type="similarity">
    <text evidence="1">Belongs to the IspH family.</text>
</comment>
<name>ISPH_NEOSM</name>
<gene>
    <name evidence="1" type="primary">ispH</name>
    <name type="ordered locus">NSE_0438</name>
</gene>
<protein>
    <recommendedName>
        <fullName evidence="1">4-hydroxy-3-methylbut-2-enyl diphosphate reductase</fullName>
        <shortName evidence="1">HMBPP reductase</shortName>
        <ecNumber evidence="1">1.17.7.4</ecNumber>
    </recommendedName>
</protein>
<sequence>MQIFVACPRGFCAGVERAIETVEIAIRRYPEKKIFVYHEIVHNSRVIQDFKARGVDFIEDITKVEPKSVLIFSAHGVSEEIEKYVKSLDLVLVDATCPLVSKIHREVQRFEKEGFIILVIGNRNHAEIIGTVGRTKTQAYIVQDPEDIDNLPSITGKLAYVTQSTLALEYTSTMINKIKEKFPNVVGRSDVCYATQNRQEAVKALAKEVDLMLIVGSTNSSNSRNLMQVSSKICQKAFLIDNYNEVEPDWFEGVDRVGISSGASAPEILVQDLVSFLKKRFPSAEVSDFKFKEEKVQFKLPII</sequence>
<organism>
    <name type="scientific">Neorickettsia sennetsu (strain ATCC VR-367 / Miyayama)</name>
    <name type="common">Ehrlichia sennetsu</name>
    <dbReference type="NCBI Taxonomy" id="222891"/>
    <lineage>
        <taxon>Bacteria</taxon>
        <taxon>Pseudomonadati</taxon>
        <taxon>Pseudomonadota</taxon>
        <taxon>Alphaproteobacteria</taxon>
        <taxon>Rickettsiales</taxon>
        <taxon>Anaplasmataceae</taxon>
        <taxon>Neorickettsia</taxon>
    </lineage>
</organism>
<dbReference type="EC" id="1.17.7.4" evidence="1"/>
<dbReference type="EMBL" id="CP000237">
    <property type="protein sequence ID" value="ABD46284.1"/>
    <property type="molecule type" value="Genomic_DNA"/>
</dbReference>
<dbReference type="SMR" id="Q2GDX3"/>
<dbReference type="STRING" id="222891.NSE_0438"/>
<dbReference type="KEGG" id="nse:NSE_0438"/>
<dbReference type="eggNOG" id="COG0761">
    <property type="taxonomic scope" value="Bacteria"/>
</dbReference>
<dbReference type="HOGENOM" id="CLU_027486_1_0_5"/>
<dbReference type="OrthoDB" id="9804068at2"/>
<dbReference type="UniPathway" id="UPA00056">
    <property type="reaction ID" value="UER00097"/>
</dbReference>
<dbReference type="UniPathway" id="UPA00059">
    <property type="reaction ID" value="UER00105"/>
</dbReference>
<dbReference type="Proteomes" id="UP000001942">
    <property type="component" value="Chromosome"/>
</dbReference>
<dbReference type="GO" id="GO:0051539">
    <property type="term" value="F:4 iron, 4 sulfur cluster binding"/>
    <property type="evidence" value="ECO:0007669"/>
    <property type="project" value="UniProtKB-UniRule"/>
</dbReference>
<dbReference type="GO" id="GO:0051745">
    <property type="term" value="F:4-hydroxy-3-methylbut-2-enyl diphosphate reductase activity"/>
    <property type="evidence" value="ECO:0007669"/>
    <property type="project" value="UniProtKB-UniRule"/>
</dbReference>
<dbReference type="GO" id="GO:0046872">
    <property type="term" value="F:metal ion binding"/>
    <property type="evidence" value="ECO:0007669"/>
    <property type="project" value="UniProtKB-KW"/>
</dbReference>
<dbReference type="GO" id="GO:0050992">
    <property type="term" value="P:dimethylallyl diphosphate biosynthetic process"/>
    <property type="evidence" value="ECO:0007669"/>
    <property type="project" value="UniProtKB-UniRule"/>
</dbReference>
<dbReference type="GO" id="GO:0019288">
    <property type="term" value="P:isopentenyl diphosphate biosynthetic process, methylerythritol 4-phosphate pathway"/>
    <property type="evidence" value="ECO:0007669"/>
    <property type="project" value="UniProtKB-UniRule"/>
</dbReference>
<dbReference type="GO" id="GO:0016114">
    <property type="term" value="P:terpenoid biosynthetic process"/>
    <property type="evidence" value="ECO:0007669"/>
    <property type="project" value="UniProtKB-UniRule"/>
</dbReference>
<dbReference type="CDD" id="cd13944">
    <property type="entry name" value="lytB_ispH"/>
    <property type="match status" value="1"/>
</dbReference>
<dbReference type="Gene3D" id="3.40.50.11270">
    <property type="match status" value="1"/>
</dbReference>
<dbReference type="Gene3D" id="3.40.1010.20">
    <property type="entry name" value="4-hydroxy-3-methylbut-2-enyl diphosphate reductase, catalytic domain"/>
    <property type="match status" value="2"/>
</dbReference>
<dbReference type="HAMAP" id="MF_00191">
    <property type="entry name" value="IspH"/>
    <property type="match status" value="1"/>
</dbReference>
<dbReference type="InterPro" id="IPR003451">
    <property type="entry name" value="LytB/IspH"/>
</dbReference>
<dbReference type="NCBIfam" id="TIGR00216">
    <property type="entry name" value="ispH_lytB"/>
    <property type="match status" value="1"/>
</dbReference>
<dbReference type="PANTHER" id="PTHR30426">
    <property type="entry name" value="4-HYDROXY-3-METHYLBUT-2-ENYL DIPHOSPHATE REDUCTASE"/>
    <property type="match status" value="1"/>
</dbReference>
<dbReference type="PANTHER" id="PTHR30426:SF0">
    <property type="entry name" value="4-HYDROXY-3-METHYLBUT-2-ENYL DIPHOSPHATE REDUCTASE"/>
    <property type="match status" value="1"/>
</dbReference>
<dbReference type="Pfam" id="PF02401">
    <property type="entry name" value="LYTB"/>
    <property type="match status" value="1"/>
</dbReference>
<proteinExistence type="inferred from homology"/>
<evidence type="ECO:0000255" key="1">
    <source>
        <dbReference type="HAMAP-Rule" id="MF_00191"/>
    </source>
</evidence>
<keyword id="KW-0004">4Fe-4S</keyword>
<keyword id="KW-0408">Iron</keyword>
<keyword id="KW-0411">Iron-sulfur</keyword>
<keyword id="KW-0414">Isoprene biosynthesis</keyword>
<keyword id="KW-0479">Metal-binding</keyword>
<keyword id="KW-0560">Oxidoreductase</keyword>
<feature type="chain" id="PRO_1000058508" description="4-hydroxy-3-methylbut-2-enyl diphosphate reductase">
    <location>
        <begin position="1"/>
        <end position="303"/>
    </location>
</feature>
<feature type="active site" description="Proton donor" evidence="1">
    <location>
        <position position="127"/>
    </location>
</feature>
<feature type="binding site" evidence="1">
    <location>
        <position position="12"/>
    </location>
    <ligand>
        <name>[4Fe-4S] cluster</name>
        <dbReference type="ChEBI" id="CHEBI:49883"/>
    </ligand>
</feature>
<feature type="binding site" evidence="1">
    <location>
        <position position="42"/>
    </location>
    <ligand>
        <name>(2E)-4-hydroxy-3-methylbut-2-enyl diphosphate</name>
        <dbReference type="ChEBI" id="CHEBI:128753"/>
    </ligand>
</feature>
<feature type="binding site" evidence="1">
    <location>
        <position position="42"/>
    </location>
    <ligand>
        <name>dimethylallyl diphosphate</name>
        <dbReference type="ChEBI" id="CHEBI:57623"/>
    </ligand>
</feature>
<feature type="binding site" evidence="1">
    <location>
        <position position="42"/>
    </location>
    <ligand>
        <name>isopentenyl diphosphate</name>
        <dbReference type="ChEBI" id="CHEBI:128769"/>
    </ligand>
</feature>
<feature type="binding site" evidence="1">
    <location>
        <position position="75"/>
    </location>
    <ligand>
        <name>(2E)-4-hydroxy-3-methylbut-2-enyl diphosphate</name>
        <dbReference type="ChEBI" id="CHEBI:128753"/>
    </ligand>
</feature>
<feature type="binding site" evidence="1">
    <location>
        <position position="75"/>
    </location>
    <ligand>
        <name>dimethylallyl diphosphate</name>
        <dbReference type="ChEBI" id="CHEBI:57623"/>
    </ligand>
</feature>
<feature type="binding site" evidence="1">
    <location>
        <position position="75"/>
    </location>
    <ligand>
        <name>isopentenyl diphosphate</name>
        <dbReference type="ChEBI" id="CHEBI:128769"/>
    </ligand>
</feature>
<feature type="binding site" evidence="1">
    <location>
        <position position="97"/>
    </location>
    <ligand>
        <name>[4Fe-4S] cluster</name>
        <dbReference type="ChEBI" id="CHEBI:49883"/>
    </ligand>
</feature>
<feature type="binding site" evidence="1">
    <location>
        <position position="125"/>
    </location>
    <ligand>
        <name>(2E)-4-hydroxy-3-methylbut-2-enyl diphosphate</name>
        <dbReference type="ChEBI" id="CHEBI:128753"/>
    </ligand>
</feature>
<feature type="binding site" evidence="1">
    <location>
        <position position="125"/>
    </location>
    <ligand>
        <name>dimethylallyl diphosphate</name>
        <dbReference type="ChEBI" id="CHEBI:57623"/>
    </ligand>
</feature>
<feature type="binding site" evidence="1">
    <location>
        <position position="125"/>
    </location>
    <ligand>
        <name>isopentenyl diphosphate</name>
        <dbReference type="ChEBI" id="CHEBI:128769"/>
    </ligand>
</feature>
<feature type="binding site" evidence="1">
    <location>
        <position position="164"/>
    </location>
    <ligand>
        <name>(2E)-4-hydroxy-3-methylbut-2-enyl diphosphate</name>
        <dbReference type="ChEBI" id="CHEBI:128753"/>
    </ligand>
</feature>
<feature type="binding site" evidence="1">
    <location>
        <position position="192"/>
    </location>
    <ligand>
        <name>[4Fe-4S] cluster</name>
        <dbReference type="ChEBI" id="CHEBI:49883"/>
    </ligand>
</feature>
<feature type="binding site" evidence="1">
    <location>
        <position position="220"/>
    </location>
    <ligand>
        <name>(2E)-4-hydroxy-3-methylbut-2-enyl diphosphate</name>
        <dbReference type="ChEBI" id="CHEBI:128753"/>
    </ligand>
</feature>
<feature type="binding site" evidence="1">
    <location>
        <position position="220"/>
    </location>
    <ligand>
        <name>dimethylallyl diphosphate</name>
        <dbReference type="ChEBI" id="CHEBI:57623"/>
    </ligand>
</feature>
<feature type="binding site" evidence="1">
    <location>
        <position position="220"/>
    </location>
    <ligand>
        <name>isopentenyl diphosphate</name>
        <dbReference type="ChEBI" id="CHEBI:128769"/>
    </ligand>
</feature>
<feature type="binding site" evidence="1">
    <location>
        <position position="221"/>
    </location>
    <ligand>
        <name>(2E)-4-hydroxy-3-methylbut-2-enyl diphosphate</name>
        <dbReference type="ChEBI" id="CHEBI:128753"/>
    </ligand>
</feature>
<feature type="binding site" evidence="1">
    <location>
        <position position="221"/>
    </location>
    <ligand>
        <name>dimethylallyl diphosphate</name>
        <dbReference type="ChEBI" id="CHEBI:57623"/>
    </ligand>
</feature>
<feature type="binding site" evidence="1">
    <location>
        <position position="221"/>
    </location>
    <ligand>
        <name>isopentenyl diphosphate</name>
        <dbReference type="ChEBI" id="CHEBI:128769"/>
    </ligand>
</feature>
<feature type="binding site" evidence="1">
    <location>
        <position position="222"/>
    </location>
    <ligand>
        <name>(2E)-4-hydroxy-3-methylbut-2-enyl diphosphate</name>
        <dbReference type="ChEBI" id="CHEBI:128753"/>
    </ligand>
</feature>
<feature type="binding site" evidence="1">
    <location>
        <position position="222"/>
    </location>
    <ligand>
        <name>dimethylallyl diphosphate</name>
        <dbReference type="ChEBI" id="CHEBI:57623"/>
    </ligand>
</feature>
<feature type="binding site" evidence="1">
    <location>
        <position position="222"/>
    </location>
    <ligand>
        <name>isopentenyl diphosphate</name>
        <dbReference type="ChEBI" id="CHEBI:128769"/>
    </ligand>
</feature>
<feature type="binding site" evidence="1">
    <location>
        <position position="264"/>
    </location>
    <ligand>
        <name>(2E)-4-hydroxy-3-methylbut-2-enyl diphosphate</name>
        <dbReference type="ChEBI" id="CHEBI:128753"/>
    </ligand>
</feature>
<feature type="binding site" evidence="1">
    <location>
        <position position="264"/>
    </location>
    <ligand>
        <name>dimethylallyl diphosphate</name>
        <dbReference type="ChEBI" id="CHEBI:57623"/>
    </ligand>
</feature>
<feature type="binding site" evidence="1">
    <location>
        <position position="264"/>
    </location>
    <ligand>
        <name>isopentenyl diphosphate</name>
        <dbReference type="ChEBI" id="CHEBI:128769"/>
    </ligand>
</feature>